<name>CINA_CLOPS</name>
<dbReference type="EMBL" id="CP000312">
    <property type="protein sequence ID" value="ABG85716.1"/>
    <property type="molecule type" value="Genomic_DNA"/>
</dbReference>
<dbReference type="RefSeq" id="WP_011591286.1">
    <property type="nucleotide sequence ID" value="NC_008262.1"/>
</dbReference>
<dbReference type="SMR" id="Q0SWN5"/>
<dbReference type="KEGG" id="cpr:CPR_0128"/>
<dbReference type="Proteomes" id="UP000001824">
    <property type="component" value="Chromosome"/>
</dbReference>
<dbReference type="CDD" id="cd00885">
    <property type="entry name" value="cinA"/>
    <property type="match status" value="1"/>
</dbReference>
<dbReference type="Gene3D" id="3.30.70.2860">
    <property type="match status" value="1"/>
</dbReference>
<dbReference type="Gene3D" id="3.90.950.20">
    <property type="entry name" value="CinA-like"/>
    <property type="match status" value="1"/>
</dbReference>
<dbReference type="Gene3D" id="3.40.980.10">
    <property type="entry name" value="MoaB/Mog-like domain"/>
    <property type="match status" value="1"/>
</dbReference>
<dbReference type="HAMAP" id="MF_00226_B">
    <property type="entry name" value="CinA_B"/>
    <property type="match status" value="1"/>
</dbReference>
<dbReference type="InterPro" id="IPR050101">
    <property type="entry name" value="CinA"/>
</dbReference>
<dbReference type="InterPro" id="IPR036653">
    <property type="entry name" value="CinA-like_C"/>
</dbReference>
<dbReference type="InterPro" id="IPR008136">
    <property type="entry name" value="CinA_C"/>
</dbReference>
<dbReference type="InterPro" id="IPR041424">
    <property type="entry name" value="CinA_KH"/>
</dbReference>
<dbReference type="InterPro" id="IPR008135">
    <property type="entry name" value="Competence-induced_CinA"/>
</dbReference>
<dbReference type="InterPro" id="IPR036425">
    <property type="entry name" value="MoaB/Mog-like_dom_sf"/>
</dbReference>
<dbReference type="InterPro" id="IPR001453">
    <property type="entry name" value="MoaB/Mog_dom"/>
</dbReference>
<dbReference type="NCBIfam" id="TIGR00200">
    <property type="entry name" value="cinA_nterm"/>
    <property type="match status" value="1"/>
</dbReference>
<dbReference type="NCBIfam" id="TIGR00177">
    <property type="entry name" value="molyb_syn"/>
    <property type="match status" value="1"/>
</dbReference>
<dbReference type="NCBIfam" id="TIGR00199">
    <property type="entry name" value="PncC_domain"/>
    <property type="match status" value="1"/>
</dbReference>
<dbReference type="NCBIfam" id="NF001813">
    <property type="entry name" value="PRK00549.1"/>
    <property type="match status" value="1"/>
</dbReference>
<dbReference type="PANTHER" id="PTHR13939">
    <property type="entry name" value="NICOTINAMIDE-NUCLEOTIDE AMIDOHYDROLASE PNCC"/>
    <property type="match status" value="1"/>
</dbReference>
<dbReference type="PANTHER" id="PTHR13939:SF0">
    <property type="entry name" value="NMN AMIDOHYDROLASE-LIKE PROTEIN YFAY"/>
    <property type="match status" value="1"/>
</dbReference>
<dbReference type="Pfam" id="PF02464">
    <property type="entry name" value="CinA"/>
    <property type="match status" value="1"/>
</dbReference>
<dbReference type="Pfam" id="PF18146">
    <property type="entry name" value="CinA_KH"/>
    <property type="match status" value="1"/>
</dbReference>
<dbReference type="Pfam" id="PF00994">
    <property type="entry name" value="MoCF_biosynth"/>
    <property type="match status" value="1"/>
</dbReference>
<dbReference type="PIRSF" id="PIRSF006728">
    <property type="entry name" value="CinA"/>
    <property type="match status" value="1"/>
</dbReference>
<dbReference type="SMART" id="SM00852">
    <property type="entry name" value="MoCF_biosynth"/>
    <property type="match status" value="1"/>
</dbReference>
<dbReference type="SUPFAM" id="SSF142433">
    <property type="entry name" value="CinA-like"/>
    <property type="match status" value="1"/>
</dbReference>
<dbReference type="SUPFAM" id="SSF53218">
    <property type="entry name" value="Molybdenum cofactor biosynthesis proteins"/>
    <property type="match status" value="1"/>
</dbReference>
<proteinExistence type="inferred from homology"/>
<organism>
    <name type="scientific">Clostridium perfringens (strain SM101 / Type A)</name>
    <dbReference type="NCBI Taxonomy" id="289380"/>
    <lineage>
        <taxon>Bacteria</taxon>
        <taxon>Bacillati</taxon>
        <taxon>Bacillota</taxon>
        <taxon>Clostridia</taxon>
        <taxon>Eubacteriales</taxon>
        <taxon>Clostridiaceae</taxon>
        <taxon>Clostridium</taxon>
    </lineage>
</organism>
<protein>
    <recommendedName>
        <fullName evidence="1">Putative competence-damage inducible protein</fullName>
    </recommendedName>
</protein>
<comment type="similarity">
    <text evidence="1">Belongs to the CinA family.</text>
</comment>
<gene>
    <name evidence="1" type="primary">cinA</name>
    <name type="ordered locus">CPR_0128</name>
</gene>
<sequence length="412" mass="45481">MKAEIMAIGTEILLGDIVNTNAQFLAKELANLGIGVYHQSVVGDNSERILEAFDNAFKNCDTIITTGGLGPTKDDLSKELAAKYFNMEMCLREELLCDLEDYFKKNNLEMTENNKKQCYFPKEAIILPNPNGTAPGAILEGENNKRIILLPGPPREMEPMFTNHVVPYLSKFTDSVLVSKILRVFGIGESKMDDLVCDLLDNENPTVAPYAKNIDVILRITAKGKDKEEAEKLIAPMEKEIRKRLGDNIYGEGEVTLEEVVGKLLVDKKMTVSTAESCTGGMVASTLINYPGISEVFMEGAVTYSNEAKMKRLGVKKETLEDFGAVSEECAREMAKGIAKNAETRIGISITGIAGPGGGTEEKPVGLVYAGLCIDGITKVKKFNFKADRQKVRTRTMMNVLDWLRRELEKID</sequence>
<feature type="chain" id="PRO_1000058702" description="Putative competence-damage inducible protein">
    <location>
        <begin position="1"/>
        <end position="412"/>
    </location>
</feature>
<evidence type="ECO:0000255" key="1">
    <source>
        <dbReference type="HAMAP-Rule" id="MF_00226"/>
    </source>
</evidence>
<accession>Q0SWN5</accession>
<reference key="1">
    <citation type="journal article" date="2006" name="Genome Res.">
        <title>Skewed genomic variability in strains of the toxigenic bacterial pathogen, Clostridium perfringens.</title>
        <authorList>
            <person name="Myers G.S.A."/>
            <person name="Rasko D.A."/>
            <person name="Cheung J.K."/>
            <person name="Ravel J."/>
            <person name="Seshadri R."/>
            <person name="DeBoy R.T."/>
            <person name="Ren Q."/>
            <person name="Varga J."/>
            <person name="Awad M.M."/>
            <person name="Brinkac L.M."/>
            <person name="Daugherty S.C."/>
            <person name="Haft D.H."/>
            <person name="Dodson R.J."/>
            <person name="Madupu R."/>
            <person name="Nelson W.C."/>
            <person name="Rosovitz M.J."/>
            <person name="Sullivan S.A."/>
            <person name="Khouri H."/>
            <person name="Dimitrov G.I."/>
            <person name="Watkins K.L."/>
            <person name="Mulligan S."/>
            <person name="Benton J."/>
            <person name="Radune D."/>
            <person name="Fisher D.J."/>
            <person name="Atkins H.S."/>
            <person name="Hiscox T."/>
            <person name="Jost B.H."/>
            <person name="Billington S.J."/>
            <person name="Songer J.G."/>
            <person name="McClane B.A."/>
            <person name="Titball R.W."/>
            <person name="Rood J.I."/>
            <person name="Melville S.B."/>
            <person name="Paulsen I.T."/>
        </authorList>
    </citation>
    <scope>NUCLEOTIDE SEQUENCE [LARGE SCALE GENOMIC DNA]</scope>
    <source>
        <strain>SM101 / Type A</strain>
    </source>
</reference>